<proteinExistence type="inferred from homology"/>
<name>TGT_BORBZ</name>
<comment type="function">
    <text evidence="1">Catalyzes the base-exchange of a guanine (G) residue with the queuine precursor 7-aminomethyl-7-deazaguanine (PreQ1) at position 34 (anticodon wobble position) in tRNAs with GU(N) anticodons (tRNA-Asp, -Asn, -His and -Tyr). Catalysis occurs through a double-displacement mechanism. The nucleophile active site attacks the C1' of nucleotide 34 to detach the guanine base from the RNA, forming a covalent enzyme-RNA intermediate. The proton acceptor active site deprotonates the incoming PreQ1, allowing a nucleophilic attack on the C1' of the ribose to form the product. After dissociation, two additional enzymatic reactions on the tRNA convert PreQ1 to queuine (Q), resulting in the hypermodified nucleoside queuosine (7-(((4,5-cis-dihydroxy-2-cyclopenten-1-yl)amino)methyl)-7-deazaguanosine).</text>
</comment>
<comment type="catalytic activity">
    <reaction evidence="1">
        <text>7-aminomethyl-7-carbaguanine + guanosine(34) in tRNA = 7-aminomethyl-7-carbaguanosine(34) in tRNA + guanine</text>
        <dbReference type="Rhea" id="RHEA:24104"/>
        <dbReference type="Rhea" id="RHEA-COMP:10341"/>
        <dbReference type="Rhea" id="RHEA-COMP:10342"/>
        <dbReference type="ChEBI" id="CHEBI:16235"/>
        <dbReference type="ChEBI" id="CHEBI:58703"/>
        <dbReference type="ChEBI" id="CHEBI:74269"/>
        <dbReference type="ChEBI" id="CHEBI:82833"/>
        <dbReference type="EC" id="2.4.2.29"/>
    </reaction>
</comment>
<comment type="cofactor">
    <cofactor evidence="1">
        <name>Zn(2+)</name>
        <dbReference type="ChEBI" id="CHEBI:29105"/>
    </cofactor>
    <text evidence="1">Binds 1 zinc ion per subunit.</text>
</comment>
<comment type="pathway">
    <text evidence="1">tRNA modification; tRNA-queuosine biosynthesis.</text>
</comment>
<comment type="subunit">
    <text evidence="1">Homodimer. Within each dimer, one monomer is responsible for RNA recognition and catalysis, while the other monomer binds to the replacement base PreQ1.</text>
</comment>
<comment type="similarity">
    <text evidence="1">Belongs to the queuine tRNA-ribosyltransferase family.</text>
</comment>
<gene>
    <name evidence="1" type="primary">tgt</name>
    <name type="ordered locus">BbuZS7_0839</name>
</gene>
<reference key="1">
    <citation type="journal article" date="2011" name="J. Bacteriol.">
        <title>Whole-genome sequences of thirteen isolates of Borrelia burgdorferi.</title>
        <authorList>
            <person name="Schutzer S.E."/>
            <person name="Fraser-Liggett C.M."/>
            <person name="Casjens S.R."/>
            <person name="Qiu W.G."/>
            <person name="Dunn J.J."/>
            <person name="Mongodin E.F."/>
            <person name="Luft B.J."/>
        </authorList>
    </citation>
    <scope>NUCLEOTIDE SEQUENCE [LARGE SCALE GENOMIC DNA]</scope>
    <source>
        <strain>ZS7</strain>
    </source>
</reference>
<evidence type="ECO:0000255" key="1">
    <source>
        <dbReference type="HAMAP-Rule" id="MF_00168"/>
    </source>
</evidence>
<sequence length="375" mass="43247">MFSVIKNDKHFNARVGFLNLPHGRVDIPCFMPVGTLGAMKGLKHAVLEKLECNLMLANTYHLYLRLGIKTVEKYVGLHNFTTWNKNFLTDSGGFRVFSFSDLRKIDLKGVHFKFHIDGSYHYFTSEGIFAMQEIFGSDIIMPLDICSSYGIDYNEANLYTNITTNWASSTFKSSKNRKEGYNGLLFLITQGNFFKDLRKRSINDILELDSPGIAIGGISVGEPREKYLEILEYSFLLIPKEKPRYVMGIGTPHYILNAIYYGIDIFDCFNPARITRHGSLLTDNGIMCIGRKEYKDDTSKVEKNCICTLCKRYSRGYLRHLIKSKELFGIVLASEHNIHYMFRLISKIRAAILNDDFLNFRTSYLKKYEEENFDE</sequence>
<organism>
    <name type="scientific">Borreliella burgdorferi (strain ZS7)</name>
    <name type="common">Borrelia burgdorferi</name>
    <dbReference type="NCBI Taxonomy" id="445985"/>
    <lineage>
        <taxon>Bacteria</taxon>
        <taxon>Pseudomonadati</taxon>
        <taxon>Spirochaetota</taxon>
        <taxon>Spirochaetia</taxon>
        <taxon>Spirochaetales</taxon>
        <taxon>Borreliaceae</taxon>
        <taxon>Borreliella</taxon>
    </lineage>
</organism>
<keyword id="KW-0328">Glycosyltransferase</keyword>
<keyword id="KW-0479">Metal-binding</keyword>
<keyword id="KW-0671">Queuosine biosynthesis</keyword>
<keyword id="KW-0808">Transferase</keyword>
<keyword id="KW-0819">tRNA processing</keyword>
<keyword id="KW-0862">Zinc</keyword>
<protein>
    <recommendedName>
        <fullName evidence="1">Queuine tRNA-ribosyltransferase</fullName>
        <ecNumber evidence="1">2.4.2.29</ecNumber>
    </recommendedName>
    <alternativeName>
        <fullName evidence="1">Guanine insertion enzyme</fullName>
    </alternativeName>
    <alternativeName>
        <fullName evidence="1">tRNA-guanine transglycosylase</fullName>
    </alternativeName>
</protein>
<feature type="chain" id="PRO_1000197985" description="Queuine tRNA-ribosyltransferase">
    <location>
        <begin position="1"/>
        <end position="375"/>
    </location>
</feature>
<feature type="region of interest" description="RNA binding" evidence="1">
    <location>
        <begin position="248"/>
        <end position="254"/>
    </location>
</feature>
<feature type="region of interest" description="RNA binding; important for wobble base 34 recognition" evidence="1">
    <location>
        <begin position="272"/>
        <end position="276"/>
    </location>
</feature>
<feature type="active site" description="Proton acceptor" evidence="1">
    <location>
        <position position="90"/>
    </location>
</feature>
<feature type="active site" description="Nucleophile" evidence="1">
    <location>
        <position position="267"/>
    </location>
</feature>
<feature type="binding site" evidence="1">
    <location>
        <begin position="90"/>
        <end position="94"/>
    </location>
    <ligand>
        <name>substrate</name>
    </ligand>
</feature>
<feature type="binding site" evidence="1">
    <location>
        <position position="144"/>
    </location>
    <ligand>
        <name>substrate</name>
    </ligand>
</feature>
<feature type="binding site" evidence="1">
    <location>
        <position position="190"/>
    </location>
    <ligand>
        <name>substrate</name>
    </ligand>
</feature>
<feature type="binding site" evidence="1">
    <location>
        <position position="217"/>
    </location>
    <ligand>
        <name>substrate</name>
    </ligand>
</feature>
<feature type="binding site" evidence="1">
    <location>
        <position position="305"/>
    </location>
    <ligand>
        <name>Zn(2+)</name>
        <dbReference type="ChEBI" id="CHEBI:29105"/>
    </ligand>
</feature>
<feature type="binding site" evidence="1">
    <location>
        <position position="307"/>
    </location>
    <ligand>
        <name>Zn(2+)</name>
        <dbReference type="ChEBI" id="CHEBI:29105"/>
    </ligand>
</feature>
<feature type="binding site" evidence="1">
    <location>
        <position position="310"/>
    </location>
    <ligand>
        <name>Zn(2+)</name>
        <dbReference type="ChEBI" id="CHEBI:29105"/>
    </ligand>
</feature>
<feature type="binding site" evidence="1">
    <location>
        <position position="336"/>
    </location>
    <ligand>
        <name>Zn(2+)</name>
        <dbReference type="ChEBI" id="CHEBI:29105"/>
    </ligand>
</feature>
<dbReference type="EC" id="2.4.2.29" evidence="1"/>
<dbReference type="EMBL" id="CP001205">
    <property type="protein sequence ID" value="ACK74900.1"/>
    <property type="molecule type" value="Genomic_DNA"/>
</dbReference>
<dbReference type="RefSeq" id="WP_002657237.1">
    <property type="nucleotide sequence ID" value="NC_011728.1"/>
</dbReference>
<dbReference type="SMR" id="B7J0Q4"/>
<dbReference type="GeneID" id="56567388"/>
<dbReference type="KEGG" id="bbz:BbuZS7_0839"/>
<dbReference type="HOGENOM" id="CLU_022060_0_1_12"/>
<dbReference type="UniPathway" id="UPA00392"/>
<dbReference type="Proteomes" id="UP000006901">
    <property type="component" value="Chromosome"/>
</dbReference>
<dbReference type="GO" id="GO:0005829">
    <property type="term" value="C:cytosol"/>
    <property type="evidence" value="ECO:0007669"/>
    <property type="project" value="TreeGrafter"/>
</dbReference>
<dbReference type="GO" id="GO:0046872">
    <property type="term" value="F:metal ion binding"/>
    <property type="evidence" value="ECO:0007669"/>
    <property type="project" value="UniProtKB-KW"/>
</dbReference>
<dbReference type="GO" id="GO:0008479">
    <property type="term" value="F:tRNA-guanosine(34) queuine transglycosylase activity"/>
    <property type="evidence" value="ECO:0007669"/>
    <property type="project" value="UniProtKB-UniRule"/>
</dbReference>
<dbReference type="GO" id="GO:0008616">
    <property type="term" value="P:queuosine biosynthetic process"/>
    <property type="evidence" value="ECO:0007669"/>
    <property type="project" value="UniProtKB-UniRule"/>
</dbReference>
<dbReference type="GO" id="GO:0002099">
    <property type="term" value="P:tRNA wobble guanine modification"/>
    <property type="evidence" value="ECO:0007669"/>
    <property type="project" value="TreeGrafter"/>
</dbReference>
<dbReference type="GO" id="GO:0101030">
    <property type="term" value="P:tRNA-guanine transglycosylation"/>
    <property type="evidence" value="ECO:0007669"/>
    <property type="project" value="InterPro"/>
</dbReference>
<dbReference type="Gene3D" id="3.20.20.105">
    <property type="entry name" value="Queuine tRNA-ribosyltransferase-like"/>
    <property type="match status" value="1"/>
</dbReference>
<dbReference type="HAMAP" id="MF_00168">
    <property type="entry name" value="Q_tRNA_Tgt"/>
    <property type="match status" value="1"/>
</dbReference>
<dbReference type="InterPro" id="IPR050076">
    <property type="entry name" value="ArchSynthase1/Queuine_TRR"/>
</dbReference>
<dbReference type="InterPro" id="IPR004803">
    <property type="entry name" value="TGT"/>
</dbReference>
<dbReference type="InterPro" id="IPR036511">
    <property type="entry name" value="TGT-like_sf"/>
</dbReference>
<dbReference type="InterPro" id="IPR002616">
    <property type="entry name" value="tRNA_ribo_trans-like"/>
</dbReference>
<dbReference type="NCBIfam" id="TIGR00430">
    <property type="entry name" value="Q_tRNA_tgt"/>
    <property type="match status" value="1"/>
</dbReference>
<dbReference type="NCBIfam" id="TIGR00449">
    <property type="entry name" value="tgt_general"/>
    <property type="match status" value="1"/>
</dbReference>
<dbReference type="PANTHER" id="PTHR46499">
    <property type="entry name" value="QUEUINE TRNA-RIBOSYLTRANSFERASE"/>
    <property type="match status" value="1"/>
</dbReference>
<dbReference type="PANTHER" id="PTHR46499:SF1">
    <property type="entry name" value="QUEUINE TRNA-RIBOSYLTRANSFERASE"/>
    <property type="match status" value="1"/>
</dbReference>
<dbReference type="Pfam" id="PF01702">
    <property type="entry name" value="TGT"/>
    <property type="match status" value="1"/>
</dbReference>
<dbReference type="SUPFAM" id="SSF51713">
    <property type="entry name" value="tRNA-guanine transglycosylase"/>
    <property type="match status" value="1"/>
</dbReference>
<accession>B7J0Q4</accession>